<reference key="1">
    <citation type="submission" date="2009-06" db="EMBL/GenBank/DDBJ databases">
        <title>Complete sequence of Thermotogales bacterium TBF 19.5.1.</title>
        <authorList>
            <consortium name="US DOE Joint Genome Institute"/>
            <person name="Lucas S."/>
            <person name="Copeland A."/>
            <person name="Lapidus A."/>
            <person name="Glavina del Rio T."/>
            <person name="Tice H."/>
            <person name="Bruce D."/>
            <person name="Goodwin L."/>
            <person name="Pitluck S."/>
            <person name="Chertkov O."/>
            <person name="Brettin T."/>
            <person name="Detter J.C."/>
            <person name="Han C."/>
            <person name="Schmutz J."/>
            <person name="Larimer F."/>
            <person name="Land M."/>
            <person name="Hauser L."/>
            <person name="Kyrpides N."/>
            <person name="Ovchinnikova G."/>
            <person name="Noll K."/>
        </authorList>
    </citation>
    <scope>NUCLEOTIDE SEQUENCE [LARGE SCALE GENOMIC DNA]</scope>
    <source>
        <strain>ATCC BAA-1733 / DSM 21960 / TBF 19.5.1</strain>
    </source>
</reference>
<organism>
    <name type="scientific">Kosmotoga olearia (strain ATCC BAA-1733 / DSM 21960 / TBF 19.5.1)</name>
    <dbReference type="NCBI Taxonomy" id="521045"/>
    <lineage>
        <taxon>Bacteria</taxon>
        <taxon>Thermotogati</taxon>
        <taxon>Thermotogota</taxon>
        <taxon>Thermotogae</taxon>
        <taxon>Kosmotogales</taxon>
        <taxon>Kosmotogaceae</taxon>
        <taxon>Kosmotoga</taxon>
    </lineage>
</organism>
<name>DER_KOSOT</name>
<dbReference type="EMBL" id="CP001634">
    <property type="protein sequence ID" value="ACR78940.1"/>
    <property type="molecule type" value="Genomic_DNA"/>
</dbReference>
<dbReference type="RefSeq" id="WP_012744727.1">
    <property type="nucleotide sequence ID" value="NC_012785.1"/>
</dbReference>
<dbReference type="SMR" id="C5CIV1"/>
<dbReference type="STRING" id="521045.Kole_0215"/>
<dbReference type="KEGG" id="kol:Kole_0215"/>
<dbReference type="eggNOG" id="COG1160">
    <property type="taxonomic scope" value="Bacteria"/>
</dbReference>
<dbReference type="HOGENOM" id="CLU_016077_6_2_0"/>
<dbReference type="OrthoDB" id="9805918at2"/>
<dbReference type="Proteomes" id="UP000002382">
    <property type="component" value="Chromosome"/>
</dbReference>
<dbReference type="GO" id="GO:0005525">
    <property type="term" value="F:GTP binding"/>
    <property type="evidence" value="ECO:0007669"/>
    <property type="project" value="UniProtKB-UniRule"/>
</dbReference>
<dbReference type="GO" id="GO:0043022">
    <property type="term" value="F:ribosome binding"/>
    <property type="evidence" value="ECO:0007669"/>
    <property type="project" value="TreeGrafter"/>
</dbReference>
<dbReference type="GO" id="GO:0042254">
    <property type="term" value="P:ribosome biogenesis"/>
    <property type="evidence" value="ECO:0007669"/>
    <property type="project" value="UniProtKB-KW"/>
</dbReference>
<dbReference type="CDD" id="cd01894">
    <property type="entry name" value="EngA1"/>
    <property type="match status" value="1"/>
</dbReference>
<dbReference type="CDD" id="cd01895">
    <property type="entry name" value="EngA2"/>
    <property type="match status" value="1"/>
</dbReference>
<dbReference type="FunFam" id="3.40.50.300:FF:000040">
    <property type="entry name" value="GTPase Der"/>
    <property type="match status" value="1"/>
</dbReference>
<dbReference type="FunFam" id="3.40.50.300:FF:000057">
    <property type="entry name" value="GTPase Der"/>
    <property type="match status" value="1"/>
</dbReference>
<dbReference type="Gene3D" id="3.30.300.20">
    <property type="match status" value="1"/>
</dbReference>
<dbReference type="Gene3D" id="3.40.50.300">
    <property type="entry name" value="P-loop containing nucleotide triphosphate hydrolases"/>
    <property type="match status" value="2"/>
</dbReference>
<dbReference type="HAMAP" id="MF_00195">
    <property type="entry name" value="GTPase_Der"/>
    <property type="match status" value="1"/>
</dbReference>
<dbReference type="InterPro" id="IPR031166">
    <property type="entry name" value="G_ENGA"/>
</dbReference>
<dbReference type="InterPro" id="IPR006073">
    <property type="entry name" value="GTP-bd"/>
</dbReference>
<dbReference type="InterPro" id="IPR016484">
    <property type="entry name" value="GTPase_Der"/>
</dbReference>
<dbReference type="InterPro" id="IPR032859">
    <property type="entry name" value="KH_dom-like"/>
</dbReference>
<dbReference type="InterPro" id="IPR015946">
    <property type="entry name" value="KH_dom-like_a/b"/>
</dbReference>
<dbReference type="InterPro" id="IPR027417">
    <property type="entry name" value="P-loop_NTPase"/>
</dbReference>
<dbReference type="InterPro" id="IPR005225">
    <property type="entry name" value="Small_GTP-bd"/>
</dbReference>
<dbReference type="NCBIfam" id="TIGR03594">
    <property type="entry name" value="GTPase_EngA"/>
    <property type="match status" value="1"/>
</dbReference>
<dbReference type="NCBIfam" id="TIGR00231">
    <property type="entry name" value="small_GTP"/>
    <property type="match status" value="2"/>
</dbReference>
<dbReference type="PANTHER" id="PTHR43834">
    <property type="entry name" value="GTPASE DER"/>
    <property type="match status" value="1"/>
</dbReference>
<dbReference type="PANTHER" id="PTHR43834:SF6">
    <property type="entry name" value="GTPASE DER"/>
    <property type="match status" value="1"/>
</dbReference>
<dbReference type="Pfam" id="PF14714">
    <property type="entry name" value="KH_dom-like"/>
    <property type="match status" value="1"/>
</dbReference>
<dbReference type="Pfam" id="PF01926">
    <property type="entry name" value="MMR_HSR1"/>
    <property type="match status" value="2"/>
</dbReference>
<dbReference type="PIRSF" id="PIRSF006485">
    <property type="entry name" value="GTP-binding_EngA"/>
    <property type="match status" value="1"/>
</dbReference>
<dbReference type="PRINTS" id="PR00326">
    <property type="entry name" value="GTP1OBG"/>
</dbReference>
<dbReference type="SUPFAM" id="SSF52540">
    <property type="entry name" value="P-loop containing nucleoside triphosphate hydrolases"/>
    <property type="match status" value="2"/>
</dbReference>
<dbReference type="PROSITE" id="PS51712">
    <property type="entry name" value="G_ENGA"/>
    <property type="match status" value="2"/>
</dbReference>
<gene>
    <name evidence="1" type="primary">der</name>
    <name type="synonym">engA</name>
    <name type="ordered locus">Kole_0215</name>
</gene>
<accession>C5CIV1</accession>
<protein>
    <recommendedName>
        <fullName evidence="1">GTPase Der</fullName>
    </recommendedName>
    <alternativeName>
        <fullName evidence="1">GTP-binding protein EngA</fullName>
    </alternativeName>
</protein>
<evidence type="ECO:0000255" key="1">
    <source>
        <dbReference type="HAMAP-Rule" id="MF_00195"/>
    </source>
</evidence>
<proteinExistence type="inferred from homology"/>
<sequence length="442" mass="49450">MATVLIVGRPNVGKSTLFNRLVGGRRAIIDDQPGVTRDFVFGRVFWQHKSFEVVDTCGLFDSPKDIIEEKMKEVTLALLSEGDLLLFVVDGRKGLTSADMDIAETLRKSKKRVILVANKVENVDKFTLEVLPELYSLGFGEPIPISAEHGLNIDVLLEKIIKTLEEAGHLLDYEPEKEEDNLKVAIIGKPNAGKSSLFNSIVGSDRSLVTEIPGTTRDMVDETIEIDGMPVTFIDTAGMRRKSKVGVKNVEYYSVMRAVDAIERSDICILVIDATLGISNQDQRIAGLVEKRGKGIITVFNKSDLLNEKHKESLLSSFERELYFIDYSPVVFTSATEGFGIDELLDKLFLVAEKIDLRIPTGLLNNLISRYTLSTPPVGRKNKKAKIYYAAQIDTRPPLIMLKVNDPALFTEPYLRGIRSTIRMNIDPFEGTPIFIKLRRKK</sequence>
<feature type="chain" id="PRO_1000204043" description="GTPase Der">
    <location>
        <begin position="1"/>
        <end position="442"/>
    </location>
</feature>
<feature type="domain" description="EngA-type G 1">
    <location>
        <begin position="2"/>
        <end position="168"/>
    </location>
</feature>
<feature type="domain" description="EngA-type G 2">
    <location>
        <begin position="182"/>
        <end position="356"/>
    </location>
</feature>
<feature type="domain" description="KH-like" evidence="1">
    <location>
        <begin position="357"/>
        <end position="442"/>
    </location>
</feature>
<feature type="binding site" evidence="1">
    <location>
        <begin position="8"/>
        <end position="15"/>
    </location>
    <ligand>
        <name>GTP</name>
        <dbReference type="ChEBI" id="CHEBI:37565"/>
        <label>1</label>
    </ligand>
</feature>
<feature type="binding site" evidence="1">
    <location>
        <begin position="55"/>
        <end position="59"/>
    </location>
    <ligand>
        <name>GTP</name>
        <dbReference type="ChEBI" id="CHEBI:37565"/>
        <label>1</label>
    </ligand>
</feature>
<feature type="binding site" evidence="1">
    <location>
        <begin position="118"/>
        <end position="121"/>
    </location>
    <ligand>
        <name>GTP</name>
        <dbReference type="ChEBI" id="CHEBI:37565"/>
        <label>1</label>
    </ligand>
</feature>
<feature type="binding site" evidence="1">
    <location>
        <begin position="188"/>
        <end position="195"/>
    </location>
    <ligand>
        <name>GTP</name>
        <dbReference type="ChEBI" id="CHEBI:37565"/>
        <label>2</label>
    </ligand>
</feature>
<feature type="binding site" evidence="1">
    <location>
        <begin position="235"/>
        <end position="239"/>
    </location>
    <ligand>
        <name>GTP</name>
        <dbReference type="ChEBI" id="CHEBI:37565"/>
        <label>2</label>
    </ligand>
</feature>
<feature type="binding site" evidence="1">
    <location>
        <begin position="301"/>
        <end position="304"/>
    </location>
    <ligand>
        <name>GTP</name>
        <dbReference type="ChEBI" id="CHEBI:37565"/>
        <label>2</label>
    </ligand>
</feature>
<comment type="function">
    <text evidence="1">GTPase that plays an essential role in the late steps of ribosome biogenesis.</text>
</comment>
<comment type="subunit">
    <text evidence="1">Associates with the 50S ribosomal subunit.</text>
</comment>
<comment type="similarity">
    <text evidence="1">Belongs to the TRAFAC class TrmE-Era-EngA-EngB-Septin-like GTPase superfamily. EngA (Der) GTPase family.</text>
</comment>
<keyword id="KW-0342">GTP-binding</keyword>
<keyword id="KW-0547">Nucleotide-binding</keyword>
<keyword id="KW-1185">Reference proteome</keyword>
<keyword id="KW-0677">Repeat</keyword>
<keyword id="KW-0690">Ribosome biogenesis</keyword>